<reference key="1">
    <citation type="journal article" date="2007" name="Genome Biol.">
        <title>Comparison of Francisella tularensis genomes reveals evolutionary events associated with the emergence of human pathogenic strains.</title>
        <authorList>
            <person name="Rohmer L."/>
            <person name="Fong C."/>
            <person name="Abmayr S."/>
            <person name="Wasnick M."/>
            <person name="Larson Freeman T.J."/>
            <person name="Radey M."/>
            <person name="Guina T."/>
            <person name="Svensson K."/>
            <person name="Hayden H.S."/>
            <person name="Jacobs M."/>
            <person name="Gallagher L.A."/>
            <person name="Manoil C."/>
            <person name="Ernst R.K."/>
            <person name="Drees B."/>
            <person name="Buckley D."/>
            <person name="Haugen E."/>
            <person name="Bovee D."/>
            <person name="Zhou Y."/>
            <person name="Chang J."/>
            <person name="Levy R."/>
            <person name="Lim R."/>
            <person name="Gillett W."/>
            <person name="Guenthener D."/>
            <person name="Kang A."/>
            <person name="Shaffer S.A."/>
            <person name="Taylor G."/>
            <person name="Chen J."/>
            <person name="Gallis B."/>
            <person name="D'Argenio D.A."/>
            <person name="Forsman M."/>
            <person name="Olson M.V."/>
            <person name="Goodlett D.R."/>
            <person name="Kaul R."/>
            <person name="Miller S.I."/>
            <person name="Brittnacher M.J."/>
        </authorList>
    </citation>
    <scope>NUCLEOTIDE SEQUENCE [LARGE SCALE GENOMIC DNA]</scope>
    <source>
        <strain>U112</strain>
    </source>
</reference>
<comment type="function">
    <text evidence="1">Tetrapolymerization of the monopyrrole PBG into the hydroxymethylbilane pre-uroporphyrinogen in several discrete steps.</text>
</comment>
<comment type="catalytic activity">
    <reaction evidence="1">
        <text>4 porphobilinogen + H2O = hydroxymethylbilane + 4 NH4(+)</text>
        <dbReference type="Rhea" id="RHEA:13185"/>
        <dbReference type="ChEBI" id="CHEBI:15377"/>
        <dbReference type="ChEBI" id="CHEBI:28938"/>
        <dbReference type="ChEBI" id="CHEBI:57845"/>
        <dbReference type="ChEBI" id="CHEBI:58126"/>
        <dbReference type="EC" id="2.5.1.61"/>
    </reaction>
</comment>
<comment type="cofactor">
    <cofactor evidence="1">
        <name>dipyrromethane</name>
        <dbReference type="ChEBI" id="CHEBI:60342"/>
    </cofactor>
    <text evidence="1">Binds 1 dipyrromethane group covalently.</text>
</comment>
<comment type="pathway">
    <text evidence="1">Porphyrin-containing compound metabolism; protoporphyrin-IX biosynthesis; coproporphyrinogen-III from 5-aminolevulinate: step 2/4.</text>
</comment>
<comment type="subunit">
    <text evidence="1">Monomer.</text>
</comment>
<comment type="miscellaneous">
    <text evidence="1">The porphobilinogen subunits are added to the dipyrromethane group.</text>
</comment>
<comment type="similarity">
    <text evidence="1">Belongs to the HMBS family.</text>
</comment>
<name>HEM3_FRATN</name>
<keyword id="KW-0627">Porphyrin biosynthesis</keyword>
<keyword id="KW-0808">Transferase</keyword>
<gene>
    <name evidence="1" type="primary">hemC</name>
    <name type="ordered locus">FTN_0135</name>
</gene>
<sequence length="300" mass="33348">MKQITIASRESKLALWQTNFVKNRIQSELNIPCEISTMKTQGDIILDQPLNKIGGKALFMKELEIAMLNNKADIAVHSLKDVPYQLPQGFCLAGFMPREDPRDAFVSNKYNSIDDLPKGAIVGTSSLRRKAQLLHYRDDLEIRDLRGNVQTRLSKLDNGDYDAIILASAGLIRLELVERITQFIPVEISLPAVGQGIVVIEALERDNDLLEKIQKLNCRESSRVATAERAFNQELKGGCHVAIGAYAELDNNQITLMAMVASSDGKKILKRKMIGDDPTKLGKLLAQEMIALGAYKILES</sequence>
<dbReference type="EC" id="2.5.1.61" evidence="1"/>
<dbReference type="EMBL" id="CP000439">
    <property type="protein sequence ID" value="ABK89046.1"/>
    <property type="molecule type" value="Genomic_DNA"/>
</dbReference>
<dbReference type="RefSeq" id="WP_003041055.1">
    <property type="nucleotide sequence ID" value="NZ_CP009633.1"/>
</dbReference>
<dbReference type="SMR" id="A0Q481"/>
<dbReference type="KEGG" id="ftn:FTN_0135"/>
<dbReference type="KEGG" id="ftx:AW25_65"/>
<dbReference type="BioCyc" id="FTUL401614:G1G75-140-MONOMER"/>
<dbReference type="UniPathway" id="UPA00251">
    <property type="reaction ID" value="UER00319"/>
</dbReference>
<dbReference type="Proteomes" id="UP000000762">
    <property type="component" value="Chromosome"/>
</dbReference>
<dbReference type="GO" id="GO:0005737">
    <property type="term" value="C:cytoplasm"/>
    <property type="evidence" value="ECO:0007669"/>
    <property type="project" value="TreeGrafter"/>
</dbReference>
<dbReference type="GO" id="GO:0004418">
    <property type="term" value="F:hydroxymethylbilane synthase activity"/>
    <property type="evidence" value="ECO:0007669"/>
    <property type="project" value="UniProtKB-UniRule"/>
</dbReference>
<dbReference type="GO" id="GO:0006782">
    <property type="term" value="P:protoporphyrinogen IX biosynthetic process"/>
    <property type="evidence" value="ECO:0007669"/>
    <property type="project" value="UniProtKB-UniRule"/>
</dbReference>
<dbReference type="CDD" id="cd13646">
    <property type="entry name" value="PBP2_EcHMBS_like"/>
    <property type="match status" value="1"/>
</dbReference>
<dbReference type="FunFam" id="3.40.190.10:FF:000004">
    <property type="entry name" value="Porphobilinogen deaminase"/>
    <property type="match status" value="1"/>
</dbReference>
<dbReference type="FunFam" id="3.40.190.10:FF:000005">
    <property type="entry name" value="Porphobilinogen deaminase"/>
    <property type="match status" value="1"/>
</dbReference>
<dbReference type="Gene3D" id="3.40.190.10">
    <property type="entry name" value="Periplasmic binding protein-like II"/>
    <property type="match status" value="2"/>
</dbReference>
<dbReference type="Gene3D" id="3.30.160.40">
    <property type="entry name" value="Porphobilinogen deaminase, C-terminal domain"/>
    <property type="match status" value="1"/>
</dbReference>
<dbReference type="HAMAP" id="MF_00260">
    <property type="entry name" value="Porphobil_deam"/>
    <property type="match status" value="1"/>
</dbReference>
<dbReference type="InterPro" id="IPR000860">
    <property type="entry name" value="HemC"/>
</dbReference>
<dbReference type="InterPro" id="IPR022419">
    <property type="entry name" value="Porphobilin_deaminase_cofac_BS"/>
</dbReference>
<dbReference type="InterPro" id="IPR022417">
    <property type="entry name" value="Porphobilin_deaminase_N"/>
</dbReference>
<dbReference type="InterPro" id="IPR022418">
    <property type="entry name" value="Porphobilinogen_deaminase_C"/>
</dbReference>
<dbReference type="InterPro" id="IPR036803">
    <property type="entry name" value="Porphobilinogen_deaminase_C_sf"/>
</dbReference>
<dbReference type="NCBIfam" id="TIGR00212">
    <property type="entry name" value="hemC"/>
    <property type="match status" value="1"/>
</dbReference>
<dbReference type="PANTHER" id="PTHR11557">
    <property type="entry name" value="PORPHOBILINOGEN DEAMINASE"/>
    <property type="match status" value="1"/>
</dbReference>
<dbReference type="PANTHER" id="PTHR11557:SF0">
    <property type="entry name" value="PORPHOBILINOGEN DEAMINASE"/>
    <property type="match status" value="1"/>
</dbReference>
<dbReference type="Pfam" id="PF01379">
    <property type="entry name" value="Porphobil_deam"/>
    <property type="match status" value="1"/>
</dbReference>
<dbReference type="Pfam" id="PF03900">
    <property type="entry name" value="Porphobil_deamC"/>
    <property type="match status" value="1"/>
</dbReference>
<dbReference type="PIRSF" id="PIRSF001438">
    <property type="entry name" value="4pyrrol_synth_OHMeBilane_synth"/>
    <property type="match status" value="1"/>
</dbReference>
<dbReference type="PRINTS" id="PR00151">
    <property type="entry name" value="PORPHBDMNASE"/>
</dbReference>
<dbReference type="SUPFAM" id="SSF53850">
    <property type="entry name" value="Periplasmic binding protein-like II"/>
    <property type="match status" value="1"/>
</dbReference>
<dbReference type="SUPFAM" id="SSF54782">
    <property type="entry name" value="Porphobilinogen deaminase (hydroxymethylbilane synthase), C-terminal domain"/>
    <property type="match status" value="1"/>
</dbReference>
<dbReference type="PROSITE" id="PS00533">
    <property type="entry name" value="PORPHOBILINOGEN_DEAM"/>
    <property type="match status" value="1"/>
</dbReference>
<accession>A0Q481</accession>
<proteinExistence type="inferred from homology"/>
<protein>
    <recommendedName>
        <fullName evidence="1">Porphobilinogen deaminase</fullName>
        <shortName evidence="1">PBG</shortName>
        <ecNumber evidence="1">2.5.1.61</ecNumber>
    </recommendedName>
    <alternativeName>
        <fullName evidence="1">Hydroxymethylbilane synthase</fullName>
        <shortName evidence="1">HMBS</shortName>
    </alternativeName>
    <alternativeName>
        <fullName evidence="1">Pre-uroporphyrinogen synthase</fullName>
    </alternativeName>
</protein>
<organism>
    <name type="scientific">Francisella tularensis subsp. novicida (strain U112)</name>
    <dbReference type="NCBI Taxonomy" id="401614"/>
    <lineage>
        <taxon>Bacteria</taxon>
        <taxon>Pseudomonadati</taxon>
        <taxon>Pseudomonadota</taxon>
        <taxon>Gammaproteobacteria</taxon>
        <taxon>Thiotrichales</taxon>
        <taxon>Francisellaceae</taxon>
        <taxon>Francisella</taxon>
    </lineage>
</organism>
<evidence type="ECO:0000255" key="1">
    <source>
        <dbReference type="HAMAP-Rule" id="MF_00260"/>
    </source>
</evidence>
<feature type="chain" id="PRO_0000304239" description="Porphobilinogen deaminase">
    <location>
        <begin position="1"/>
        <end position="300"/>
    </location>
</feature>
<feature type="modified residue" description="S-(dipyrrolylmethanemethyl)cysteine" evidence="1">
    <location>
        <position position="239"/>
    </location>
</feature>